<keyword id="KW-0408">Iron</keyword>
<keyword id="KW-0411">Iron-sulfur</keyword>
<keyword id="KW-0479">Metal-binding</keyword>
<keyword id="KW-1185">Reference proteome</keyword>
<organism>
    <name type="scientific">Chromohalobacter salexigens (strain ATCC BAA-138 / DSM 3043 / CIP 106854 / NCIMB 13768 / 1H11)</name>
    <dbReference type="NCBI Taxonomy" id="290398"/>
    <lineage>
        <taxon>Bacteria</taxon>
        <taxon>Pseudomonadati</taxon>
        <taxon>Pseudomonadota</taxon>
        <taxon>Gammaproteobacteria</taxon>
        <taxon>Oceanospirillales</taxon>
        <taxon>Halomonadaceae</taxon>
        <taxon>Chromohalobacter</taxon>
    </lineage>
</organism>
<name>ERPA_CHRSD</name>
<dbReference type="EMBL" id="CP000285">
    <property type="protein sequence ID" value="ABE60643.1"/>
    <property type="molecule type" value="Genomic_DNA"/>
</dbReference>
<dbReference type="RefSeq" id="WP_011508589.1">
    <property type="nucleotide sequence ID" value="NC_007963.1"/>
</dbReference>
<dbReference type="SMR" id="Q1QSB5"/>
<dbReference type="STRING" id="290398.Csal_3299"/>
<dbReference type="GeneID" id="95335990"/>
<dbReference type="KEGG" id="csa:Csal_3299"/>
<dbReference type="eggNOG" id="COG0316">
    <property type="taxonomic scope" value="Bacteria"/>
</dbReference>
<dbReference type="HOGENOM" id="CLU_069054_5_3_6"/>
<dbReference type="OrthoDB" id="9801228at2"/>
<dbReference type="Proteomes" id="UP000000239">
    <property type="component" value="Chromosome"/>
</dbReference>
<dbReference type="GO" id="GO:0051537">
    <property type="term" value="F:2 iron, 2 sulfur cluster binding"/>
    <property type="evidence" value="ECO:0007669"/>
    <property type="project" value="UniProtKB-ARBA"/>
</dbReference>
<dbReference type="GO" id="GO:0051539">
    <property type="term" value="F:4 iron, 4 sulfur cluster binding"/>
    <property type="evidence" value="ECO:0007669"/>
    <property type="project" value="TreeGrafter"/>
</dbReference>
<dbReference type="GO" id="GO:0005506">
    <property type="term" value="F:iron ion binding"/>
    <property type="evidence" value="ECO:0007669"/>
    <property type="project" value="UniProtKB-UniRule"/>
</dbReference>
<dbReference type="GO" id="GO:0016226">
    <property type="term" value="P:iron-sulfur cluster assembly"/>
    <property type="evidence" value="ECO:0007669"/>
    <property type="project" value="UniProtKB-UniRule"/>
</dbReference>
<dbReference type="FunFam" id="2.60.300.12:FF:000002">
    <property type="entry name" value="Iron-sulfur cluster insertion protein ErpA"/>
    <property type="match status" value="1"/>
</dbReference>
<dbReference type="Gene3D" id="2.60.300.12">
    <property type="entry name" value="HesB-like domain"/>
    <property type="match status" value="1"/>
</dbReference>
<dbReference type="HAMAP" id="MF_01380">
    <property type="entry name" value="Fe_S_insert_ErpA"/>
    <property type="match status" value="1"/>
</dbReference>
<dbReference type="InterPro" id="IPR000361">
    <property type="entry name" value="FeS_biogenesis"/>
</dbReference>
<dbReference type="InterPro" id="IPR016092">
    <property type="entry name" value="FeS_cluster_insertion"/>
</dbReference>
<dbReference type="InterPro" id="IPR017870">
    <property type="entry name" value="FeS_cluster_insertion_CS"/>
</dbReference>
<dbReference type="InterPro" id="IPR023063">
    <property type="entry name" value="FeS_cluster_insertion_RrpA"/>
</dbReference>
<dbReference type="InterPro" id="IPR035903">
    <property type="entry name" value="HesB-like_dom_sf"/>
</dbReference>
<dbReference type="NCBIfam" id="TIGR00049">
    <property type="entry name" value="iron-sulfur cluster assembly accessory protein"/>
    <property type="match status" value="1"/>
</dbReference>
<dbReference type="NCBIfam" id="NF010147">
    <property type="entry name" value="PRK13623.1"/>
    <property type="match status" value="1"/>
</dbReference>
<dbReference type="PANTHER" id="PTHR43011">
    <property type="entry name" value="IRON-SULFUR CLUSTER ASSEMBLY 2 HOMOLOG, MITOCHONDRIAL"/>
    <property type="match status" value="1"/>
</dbReference>
<dbReference type="PANTHER" id="PTHR43011:SF1">
    <property type="entry name" value="IRON-SULFUR CLUSTER ASSEMBLY 2 HOMOLOG, MITOCHONDRIAL"/>
    <property type="match status" value="1"/>
</dbReference>
<dbReference type="Pfam" id="PF01521">
    <property type="entry name" value="Fe-S_biosyn"/>
    <property type="match status" value="1"/>
</dbReference>
<dbReference type="SUPFAM" id="SSF89360">
    <property type="entry name" value="HesB-like domain"/>
    <property type="match status" value="1"/>
</dbReference>
<dbReference type="PROSITE" id="PS01152">
    <property type="entry name" value="HESB"/>
    <property type="match status" value="1"/>
</dbReference>
<feature type="chain" id="PRO_0000311472" description="Iron-sulfur cluster insertion protein ErpA">
    <location>
        <begin position="1"/>
        <end position="117"/>
    </location>
</feature>
<feature type="binding site" evidence="1">
    <location>
        <position position="45"/>
    </location>
    <ligand>
        <name>iron-sulfur cluster</name>
        <dbReference type="ChEBI" id="CHEBI:30408"/>
    </ligand>
</feature>
<feature type="binding site" evidence="1">
    <location>
        <position position="109"/>
    </location>
    <ligand>
        <name>iron-sulfur cluster</name>
        <dbReference type="ChEBI" id="CHEBI:30408"/>
    </ligand>
</feature>
<feature type="binding site" evidence="1">
    <location>
        <position position="111"/>
    </location>
    <ligand>
        <name>iron-sulfur cluster</name>
        <dbReference type="ChEBI" id="CHEBI:30408"/>
    </ligand>
</feature>
<sequence length="117" mass="12122">MSGAESFVPAPMYLTDAAAQRLGALVEEEGNPGLKLRVYVTGGGCSGFQYGFDFADTVGDEDTIIENGTASMVVDALSYQYLVGSTVDFEEGLAGARFIIKNPNATSTCGCGASFAV</sequence>
<protein>
    <recommendedName>
        <fullName evidence="1">Iron-sulfur cluster insertion protein ErpA</fullName>
    </recommendedName>
</protein>
<comment type="function">
    <text evidence="1">Required for insertion of 4Fe-4S clusters for at least IspG.</text>
</comment>
<comment type="cofactor">
    <cofactor evidence="1">
        <name>iron-sulfur cluster</name>
        <dbReference type="ChEBI" id="CHEBI:30408"/>
    </cofactor>
    <text evidence="1">Binds 1 iron-sulfur cluster per subunit.</text>
</comment>
<comment type="subunit">
    <text evidence="1">Homodimer.</text>
</comment>
<comment type="similarity">
    <text evidence="1">Belongs to the HesB/IscA family.</text>
</comment>
<gene>
    <name evidence="1" type="primary">erpA</name>
    <name type="ordered locus">Csal_3299</name>
</gene>
<proteinExistence type="inferred from homology"/>
<evidence type="ECO:0000255" key="1">
    <source>
        <dbReference type="HAMAP-Rule" id="MF_01380"/>
    </source>
</evidence>
<reference key="1">
    <citation type="journal article" date="2011" name="Stand. Genomic Sci.">
        <title>Complete genome sequence of the halophilic and highly halotolerant Chromohalobacter salexigens type strain (1H11(T)).</title>
        <authorList>
            <person name="Copeland A."/>
            <person name="O'Connor K."/>
            <person name="Lucas S."/>
            <person name="Lapidus A."/>
            <person name="Berry K.W."/>
            <person name="Detter J.C."/>
            <person name="Del Rio T.G."/>
            <person name="Hammon N."/>
            <person name="Dalin E."/>
            <person name="Tice H."/>
            <person name="Pitluck S."/>
            <person name="Bruce D."/>
            <person name="Goodwin L."/>
            <person name="Han C."/>
            <person name="Tapia R."/>
            <person name="Saunders E."/>
            <person name="Schmutz J."/>
            <person name="Brettin T."/>
            <person name="Larimer F."/>
            <person name="Land M."/>
            <person name="Hauser L."/>
            <person name="Vargas C."/>
            <person name="Nieto J.J."/>
            <person name="Kyrpides N.C."/>
            <person name="Ivanova N."/>
            <person name="Goker M."/>
            <person name="Klenk H.P."/>
            <person name="Csonka L.N."/>
            <person name="Woyke T."/>
        </authorList>
    </citation>
    <scope>NUCLEOTIDE SEQUENCE [LARGE SCALE GENOMIC DNA]</scope>
    <source>
        <strain>ATCC BAA-138 / DSM 3043 / CIP 106854 / NCIMB 13768 / 1H11</strain>
    </source>
</reference>
<accession>Q1QSB5</accession>